<accession>Q5FN26</accession>
<feature type="chain" id="PRO_0000225395" description="Dihydroxy-acid dehydratase">
    <location>
        <begin position="1"/>
        <end position="618"/>
    </location>
</feature>
<feature type="active site" description="Proton acceptor" evidence="1">
    <location>
        <position position="516"/>
    </location>
</feature>
<feature type="binding site" evidence="1">
    <location>
        <position position="81"/>
    </location>
    <ligand>
        <name>Mg(2+)</name>
        <dbReference type="ChEBI" id="CHEBI:18420"/>
    </ligand>
</feature>
<feature type="binding site" evidence="1">
    <location>
        <position position="122"/>
    </location>
    <ligand>
        <name>[2Fe-2S] cluster</name>
        <dbReference type="ChEBI" id="CHEBI:190135"/>
    </ligand>
</feature>
<feature type="binding site" evidence="1">
    <location>
        <position position="123"/>
    </location>
    <ligand>
        <name>Mg(2+)</name>
        <dbReference type="ChEBI" id="CHEBI:18420"/>
    </ligand>
</feature>
<feature type="binding site" description="via carbamate group" evidence="1">
    <location>
        <position position="124"/>
    </location>
    <ligand>
        <name>Mg(2+)</name>
        <dbReference type="ChEBI" id="CHEBI:18420"/>
    </ligand>
</feature>
<feature type="binding site" evidence="1">
    <location>
        <position position="195"/>
    </location>
    <ligand>
        <name>[2Fe-2S] cluster</name>
        <dbReference type="ChEBI" id="CHEBI:190135"/>
    </ligand>
</feature>
<feature type="binding site" evidence="1">
    <location>
        <position position="490"/>
    </location>
    <ligand>
        <name>Mg(2+)</name>
        <dbReference type="ChEBI" id="CHEBI:18420"/>
    </ligand>
</feature>
<feature type="modified residue" description="N6-carboxylysine" evidence="1">
    <location>
        <position position="124"/>
    </location>
</feature>
<proteinExistence type="inferred from homology"/>
<keyword id="KW-0001">2Fe-2S</keyword>
<keyword id="KW-0028">Amino-acid biosynthesis</keyword>
<keyword id="KW-0100">Branched-chain amino acid biosynthesis</keyword>
<keyword id="KW-0408">Iron</keyword>
<keyword id="KW-0411">Iron-sulfur</keyword>
<keyword id="KW-0456">Lyase</keyword>
<keyword id="KW-0460">Magnesium</keyword>
<keyword id="KW-0479">Metal-binding</keyword>
<keyword id="KW-1185">Reference proteome</keyword>
<organism>
    <name type="scientific">Gluconobacter oxydans (strain 621H)</name>
    <name type="common">Gluconobacter suboxydans</name>
    <dbReference type="NCBI Taxonomy" id="290633"/>
    <lineage>
        <taxon>Bacteria</taxon>
        <taxon>Pseudomonadati</taxon>
        <taxon>Pseudomonadota</taxon>
        <taxon>Alphaproteobacteria</taxon>
        <taxon>Acetobacterales</taxon>
        <taxon>Acetobacteraceae</taxon>
        <taxon>Gluconobacter</taxon>
    </lineage>
</organism>
<reference key="1">
    <citation type="journal article" date="2005" name="Nat. Biotechnol.">
        <title>Complete genome sequence of the acetic acid bacterium Gluconobacter oxydans.</title>
        <authorList>
            <person name="Prust C."/>
            <person name="Hoffmeister M."/>
            <person name="Liesegang H."/>
            <person name="Wiezer A."/>
            <person name="Fricke W.F."/>
            <person name="Ehrenreich A."/>
            <person name="Gottschalk G."/>
            <person name="Deppenmeier U."/>
        </authorList>
    </citation>
    <scope>NUCLEOTIDE SEQUENCE [LARGE SCALE GENOMIC DNA]</scope>
    <source>
        <strain>621H</strain>
    </source>
</reference>
<gene>
    <name evidence="1" type="primary">ilvD</name>
    <name type="ordered locus">GOX2491</name>
</gene>
<sequence>MPAYRSRTTTHGRNMAGARALWRATGMKDGDFGKPIIAIANSFTQFVPGHVHLKDMGSLVASAIEEVGGIAKEFNTIAVDDGIAMGHGGMLYSLPSRELIADSVEYMVNAHCADAIVCISNCDKITPGMLMASMRLNIPVVFVSGGPMEAGKINGPGVTRKLDLIDSMVAAANPDVSDSESEQIERSACPTCGSCSGMFTANSMNCLTEALGLSLPGNGSLLATHNDRRELFLSAGRRIVELARRWYEQDDASVLPRSIATRAAFENAMTLDIAMGGSTNTVLHLLAAAREGEVDFHMHDIDRLSRRVPNLCKVAPAKNDVHMEDVHRAGGIPAILGELDRAGLIHKDVPTVYAPTLGDALKKWDILNGDEEAAHLFKAAPGNVRTVHAFSQSSRYHELDQDREGGVLRDKAHAFSQDGGLAVLYGNLAEDGAIVKTAGVEASILTFTGTARVFESQDDAVAAILGNRIVAGDVVVIRYEGPKGGPGMQEMLYPTSYLKSKGLGKVCALITDGRFSGGSSGLSIGHMSPEAAEGGLIGLVEDGDRIEIDIPNRTLHLAVSDSDIADRRERMNARGASAWKPNRERVVSKALQAYAAMTTSAAHGAVRDLSQIIVKTRI</sequence>
<comment type="function">
    <text evidence="1">Functions in the biosynthesis of branched-chain amino acids. Catalyzes the dehydration of (2R,3R)-2,3-dihydroxy-3-methylpentanoate (2,3-dihydroxy-3-methylvalerate) into 2-oxo-3-methylpentanoate (2-oxo-3-methylvalerate) and of (2R)-2,3-dihydroxy-3-methylbutanoate (2,3-dihydroxyisovalerate) into 2-oxo-3-methylbutanoate (2-oxoisovalerate), the penultimate precursor to L-isoleucine and L-valine, respectively.</text>
</comment>
<comment type="catalytic activity">
    <reaction evidence="1">
        <text>(2R)-2,3-dihydroxy-3-methylbutanoate = 3-methyl-2-oxobutanoate + H2O</text>
        <dbReference type="Rhea" id="RHEA:24809"/>
        <dbReference type="ChEBI" id="CHEBI:11851"/>
        <dbReference type="ChEBI" id="CHEBI:15377"/>
        <dbReference type="ChEBI" id="CHEBI:49072"/>
        <dbReference type="EC" id="4.2.1.9"/>
    </reaction>
    <physiologicalReaction direction="left-to-right" evidence="1">
        <dbReference type="Rhea" id="RHEA:24810"/>
    </physiologicalReaction>
</comment>
<comment type="catalytic activity">
    <reaction evidence="1">
        <text>(2R,3R)-2,3-dihydroxy-3-methylpentanoate = (S)-3-methyl-2-oxopentanoate + H2O</text>
        <dbReference type="Rhea" id="RHEA:27694"/>
        <dbReference type="ChEBI" id="CHEBI:15377"/>
        <dbReference type="ChEBI" id="CHEBI:35146"/>
        <dbReference type="ChEBI" id="CHEBI:49258"/>
        <dbReference type="EC" id="4.2.1.9"/>
    </reaction>
    <physiologicalReaction direction="left-to-right" evidence="1">
        <dbReference type="Rhea" id="RHEA:27695"/>
    </physiologicalReaction>
</comment>
<comment type="cofactor">
    <cofactor evidence="1">
        <name>[2Fe-2S] cluster</name>
        <dbReference type="ChEBI" id="CHEBI:190135"/>
    </cofactor>
    <text evidence="1">Binds 1 [2Fe-2S] cluster per subunit. This cluster acts as a Lewis acid cofactor.</text>
</comment>
<comment type="cofactor">
    <cofactor evidence="1">
        <name>Mg(2+)</name>
        <dbReference type="ChEBI" id="CHEBI:18420"/>
    </cofactor>
</comment>
<comment type="pathway">
    <text evidence="1">Amino-acid biosynthesis; L-isoleucine biosynthesis; L-isoleucine from 2-oxobutanoate: step 3/4.</text>
</comment>
<comment type="pathway">
    <text evidence="1">Amino-acid biosynthesis; L-valine biosynthesis; L-valine from pyruvate: step 3/4.</text>
</comment>
<comment type="subunit">
    <text evidence="1">Homodimer.</text>
</comment>
<comment type="similarity">
    <text evidence="1">Belongs to the IlvD/Edd family.</text>
</comment>
<name>ILVD_GLUOX</name>
<dbReference type="EC" id="4.2.1.9" evidence="1"/>
<dbReference type="EMBL" id="CP000009">
    <property type="protein sequence ID" value="AAW62221.1"/>
    <property type="molecule type" value="Genomic_DNA"/>
</dbReference>
<dbReference type="RefSeq" id="WP_011253988.1">
    <property type="nucleotide sequence ID" value="NC_006677.1"/>
</dbReference>
<dbReference type="SMR" id="Q5FN26"/>
<dbReference type="STRING" id="290633.GOX2491"/>
<dbReference type="KEGG" id="gox:GOX2491"/>
<dbReference type="eggNOG" id="COG0129">
    <property type="taxonomic scope" value="Bacteria"/>
</dbReference>
<dbReference type="HOGENOM" id="CLU_014271_4_2_5"/>
<dbReference type="UniPathway" id="UPA00047">
    <property type="reaction ID" value="UER00057"/>
</dbReference>
<dbReference type="UniPathway" id="UPA00049">
    <property type="reaction ID" value="UER00061"/>
</dbReference>
<dbReference type="Proteomes" id="UP000006375">
    <property type="component" value="Chromosome"/>
</dbReference>
<dbReference type="GO" id="GO:0005829">
    <property type="term" value="C:cytosol"/>
    <property type="evidence" value="ECO:0007669"/>
    <property type="project" value="TreeGrafter"/>
</dbReference>
<dbReference type="GO" id="GO:0051537">
    <property type="term" value="F:2 iron, 2 sulfur cluster binding"/>
    <property type="evidence" value="ECO:0007669"/>
    <property type="project" value="UniProtKB-UniRule"/>
</dbReference>
<dbReference type="GO" id="GO:0004160">
    <property type="term" value="F:dihydroxy-acid dehydratase activity"/>
    <property type="evidence" value="ECO:0007669"/>
    <property type="project" value="UniProtKB-UniRule"/>
</dbReference>
<dbReference type="GO" id="GO:0000287">
    <property type="term" value="F:magnesium ion binding"/>
    <property type="evidence" value="ECO:0007669"/>
    <property type="project" value="UniProtKB-UniRule"/>
</dbReference>
<dbReference type="GO" id="GO:0009097">
    <property type="term" value="P:isoleucine biosynthetic process"/>
    <property type="evidence" value="ECO:0007669"/>
    <property type="project" value="UniProtKB-UniRule"/>
</dbReference>
<dbReference type="GO" id="GO:0009099">
    <property type="term" value="P:L-valine biosynthetic process"/>
    <property type="evidence" value="ECO:0007669"/>
    <property type="project" value="UniProtKB-UniRule"/>
</dbReference>
<dbReference type="FunFam" id="3.50.30.80:FF:000001">
    <property type="entry name" value="Dihydroxy-acid dehydratase"/>
    <property type="match status" value="1"/>
</dbReference>
<dbReference type="Gene3D" id="3.50.30.80">
    <property type="entry name" value="IlvD/EDD C-terminal domain-like"/>
    <property type="match status" value="1"/>
</dbReference>
<dbReference type="HAMAP" id="MF_00012">
    <property type="entry name" value="IlvD"/>
    <property type="match status" value="1"/>
</dbReference>
<dbReference type="InterPro" id="IPR042096">
    <property type="entry name" value="Dihydro-acid_dehy_C"/>
</dbReference>
<dbReference type="InterPro" id="IPR004404">
    <property type="entry name" value="DihydroxyA_deHydtase"/>
</dbReference>
<dbReference type="InterPro" id="IPR020558">
    <property type="entry name" value="DiOHA_6PGluconate_deHydtase_CS"/>
</dbReference>
<dbReference type="InterPro" id="IPR056740">
    <property type="entry name" value="ILV_EDD_C"/>
</dbReference>
<dbReference type="InterPro" id="IPR000581">
    <property type="entry name" value="ILV_EDD_N"/>
</dbReference>
<dbReference type="InterPro" id="IPR037237">
    <property type="entry name" value="IlvD/EDD_N"/>
</dbReference>
<dbReference type="NCBIfam" id="TIGR00110">
    <property type="entry name" value="ilvD"/>
    <property type="match status" value="1"/>
</dbReference>
<dbReference type="NCBIfam" id="NF009103">
    <property type="entry name" value="PRK12448.1"/>
    <property type="match status" value="1"/>
</dbReference>
<dbReference type="PANTHER" id="PTHR43661">
    <property type="entry name" value="D-XYLONATE DEHYDRATASE"/>
    <property type="match status" value="1"/>
</dbReference>
<dbReference type="PANTHER" id="PTHR43661:SF3">
    <property type="entry name" value="D-XYLONATE DEHYDRATASE YAGF-RELATED"/>
    <property type="match status" value="1"/>
</dbReference>
<dbReference type="Pfam" id="PF24877">
    <property type="entry name" value="ILV_EDD_C"/>
    <property type="match status" value="1"/>
</dbReference>
<dbReference type="Pfam" id="PF00920">
    <property type="entry name" value="ILVD_EDD_N"/>
    <property type="match status" value="1"/>
</dbReference>
<dbReference type="SUPFAM" id="SSF143975">
    <property type="entry name" value="IlvD/EDD N-terminal domain-like"/>
    <property type="match status" value="1"/>
</dbReference>
<dbReference type="SUPFAM" id="SSF52016">
    <property type="entry name" value="LeuD/IlvD-like"/>
    <property type="match status" value="1"/>
</dbReference>
<dbReference type="PROSITE" id="PS00886">
    <property type="entry name" value="ILVD_EDD_1"/>
    <property type="match status" value="1"/>
</dbReference>
<dbReference type="PROSITE" id="PS00887">
    <property type="entry name" value="ILVD_EDD_2"/>
    <property type="match status" value="1"/>
</dbReference>
<evidence type="ECO:0000255" key="1">
    <source>
        <dbReference type="HAMAP-Rule" id="MF_00012"/>
    </source>
</evidence>
<protein>
    <recommendedName>
        <fullName evidence="1">Dihydroxy-acid dehydratase</fullName>
        <shortName evidence="1">DAD</shortName>
        <ecNumber evidence="1">4.2.1.9</ecNumber>
    </recommendedName>
</protein>